<proteinExistence type="inferred from homology"/>
<accession>B4E9G1</accession>
<gene>
    <name evidence="1" type="primary">adk</name>
    <name type="ordered locus">BceJ2315_27000</name>
    <name type="ORF">BCAL2762</name>
</gene>
<comment type="function">
    <text evidence="1">Catalyzes the reversible transfer of the terminal phosphate group between ATP and AMP. Plays an important role in cellular energy homeostasis and in adenine nucleotide metabolism.</text>
</comment>
<comment type="catalytic activity">
    <reaction evidence="1">
        <text>AMP + ATP = 2 ADP</text>
        <dbReference type="Rhea" id="RHEA:12973"/>
        <dbReference type="ChEBI" id="CHEBI:30616"/>
        <dbReference type="ChEBI" id="CHEBI:456215"/>
        <dbReference type="ChEBI" id="CHEBI:456216"/>
        <dbReference type="EC" id="2.7.4.3"/>
    </reaction>
</comment>
<comment type="pathway">
    <text evidence="1">Purine metabolism; AMP biosynthesis via salvage pathway; AMP from ADP: step 1/1.</text>
</comment>
<comment type="subunit">
    <text evidence="1">Monomer.</text>
</comment>
<comment type="subcellular location">
    <subcellularLocation>
        <location evidence="1">Cytoplasm</location>
    </subcellularLocation>
</comment>
<comment type="domain">
    <text evidence="1">Consists of three domains, a large central CORE domain and two small peripheral domains, NMPbind and LID, which undergo movements during catalysis. The LID domain closes over the site of phosphoryl transfer upon ATP binding. Assembling and dissambling the active center during each catalytic cycle provides an effective means to prevent ATP hydrolysis.</text>
</comment>
<comment type="similarity">
    <text evidence="1">Belongs to the adenylate kinase family.</text>
</comment>
<dbReference type="EC" id="2.7.4.3" evidence="1"/>
<dbReference type="EMBL" id="AM747720">
    <property type="protein sequence ID" value="CAR53062.1"/>
    <property type="molecule type" value="Genomic_DNA"/>
</dbReference>
<dbReference type="RefSeq" id="WP_006482212.1">
    <property type="nucleotide sequence ID" value="NC_011000.1"/>
</dbReference>
<dbReference type="SMR" id="B4E9G1"/>
<dbReference type="GeneID" id="83049360"/>
<dbReference type="KEGG" id="bcj:BCAL2762"/>
<dbReference type="eggNOG" id="COG0563">
    <property type="taxonomic scope" value="Bacteria"/>
</dbReference>
<dbReference type="HOGENOM" id="CLU_032354_1_2_4"/>
<dbReference type="BioCyc" id="BCEN216591:G1G1V-3060-MONOMER"/>
<dbReference type="UniPathway" id="UPA00588">
    <property type="reaction ID" value="UER00649"/>
</dbReference>
<dbReference type="Proteomes" id="UP000001035">
    <property type="component" value="Chromosome 1"/>
</dbReference>
<dbReference type="GO" id="GO:0005737">
    <property type="term" value="C:cytoplasm"/>
    <property type="evidence" value="ECO:0007669"/>
    <property type="project" value="UniProtKB-SubCell"/>
</dbReference>
<dbReference type="GO" id="GO:0004017">
    <property type="term" value="F:adenylate kinase activity"/>
    <property type="evidence" value="ECO:0007669"/>
    <property type="project" value="UniProtKB-UniRule"/>
</dbReference>
<dbReference type="GO" id="GO:0005524">
    <property type="term" value="F:ATP binding"/>
    <property type="evidence" value="ECO:0007669"/>
    <property type="project" value="UniProtKB-UniRule"/>
</dbReference>
<dbReference type="GO" id="GO:0044209">
    <property type="term" value="P:AMP salvage"/>
    <property type="evidence" value="ECO:0007669"/>
    <property type="project" value="UniProtKB-UniRule"/>
</dbReference>
<dbReference type="CDD" id="cd01428">
    <property type="entry name" value="ADK"/>
    <property type="match status" value="1"/>
</dbReference>
<dbReference type="FunFam" id="3.40.50.300:FF:000106">
    <property type="entry name" value="Adenylate kinase mitochondrial"/>
    <property type="match status" value="1"/>
</dbReference>
<dbReference type="Gene3D" id="3.40.50.300">
    <property type="entry name" value="P-loop containing nucleotide triphosphate hydrolases"/>
    <property type="match status" value="1"/>
</dbReference>
<dbReference type="HAMAP" id="MF_00235">
    <property type="entry name" value="Adenylate_kinase_Adk"/>
    <property type="match status" value="1"/>
</dbReference>
<dbReference type="InterPro" id="IPR006259">
    <property type="entry name" value="Adenyl_kin_sub"/>
</dbReference>
<dbReference type="InterPro" id="IPR000850">
    <property type="entry name" value="Adenylat/UMP-CMP_kin"/>
</dbReference>
<dbReference type="InterPro" id="IPR033690">
    <property type="entry name" value="Adenylat_kinase_CS"/>
</dbReference>
<dbReference type="InterPro" id="IPR007862">
    <property type="entry name" value="Adenylate_kinase_lid-dom"/>
</dbReference>
<dbReference type="InterPro" id="IPR027417">
    <property type="entry name" value="P-loop_NTPase"/>
</dbReference>
<dbReference type="NCBIfam" id="TIGR01351">
    <property type="entry name" value="adk"/>
    <property type="match status" value="1"/>
</dbReference>
<dbReference type="NCBIfam" id="NF001379">
    <property type="entry name" value="PRK00279.1-1"/>
    <property type="match status" value="1"/>
</dbReference>
<dbReference type="NCBIfam" id="NF001380">
    <property type="entry name" value="PRK00279.1-2"/>
    <property type="match status" value="1"/>
</dbReference>
<dbReference type="NCBIfam" id="NF001381">
    <property type="entry name" value="PRK00279.1-3"/>
    <property type="match status" value="1"/>
</dbReference>
<dbReference type="NCBIfam" id="NF011100">
    <property type="entry name" value="PRK14527.1"/>
    <property type="match status" value="1"/>
</dbReference>
<dbReference type="PANTHER" id="PTHR23359">
    <property type="entry name" value="NUCLEOTIDE KINASE"/>
    <property type="match status" value="1"/>
</dbReference>
<dbReference type="Pfam" id="PF00406">
    <property type="entry name" value="ADK"/>
    <property type="match status" value="1"/>
</dbReference>
<dbReference type="Pfam" id="PF05191">
    <property type="entry name" value="ADK_lid"/>
    <property type="match status" value="1"/>
</dbReference>
<dbReference type="PRINTS" id="PR00094">
    <property type="entry name" value="ADENYLTKNASE"/>
</dbReference>
<dbReference type="SUPFAM" id="SSF52540">
    <property type="entry name" value="P-loop containing nucleoside triphosphate hydrolases"/>
    <property type="match status" value="1"/>
</dbReference>
<dbReference type="PROSITE" id="PS00113">
    <property type="entry name" value="ADENYLATE_KINASE"/>
    <property type="match status" value="1"/>
</dbReference>
<protein>
    <recommendedName>
        <fullName evidence="1">Adenylate kinase</fullName>
        <shortName evidence="1">AK</shortName>
        <ecNumber evidence="1">2.7.4.3</ecNumber>
    </recommendedName>
    <alternativeName>
        <fullName evidence="1">ATP-AMP transphosphorylase</fullName>
    </alternativeName>
    <alternativeName>
        <fullName evidence="1">ATP:AMP phosphotransferase</fullName>
    </alternativeName>
    <alternativeName>
        <fullName evidence="1">Adenylate monophosphate kinase</fullName>
    </alternativeName>
</protein>
<sequence>MRLILLGAPGAGKGTQANFIKEKFGIPQISTGDMLRAAVKAGTPLGVEAKGYMDAGKLVPDALIIGLVKERLKESDCANGYLFDGFPRTIAQADAMKEAGVAIDYVLEIDVPFSEIIERMSGRRTHPASGRTYHVKFNPPKVEGHDDVTGEPLIQRDDDKEETVKKRLEVYEAQTKPLITYYGDWAQRGEENGLKAPQYRKISGLGTVDEIRERAFDALK</sequence>
<organism>
    <name type="scientific">Burkholderia cenocepacia (strain ATCC BAA-245 / DSM 16553 / LMG 16656 / NCTC 13227 / J2315 / CF5610)</name>
    <name type="common">Burkholderia cepacia (strain J2315)</name>
    <dbReference type="NCBI Taxonomy" id="216591"/>
    <lineage>
        <taxon>Bacteria</taxon>
        <taxon>Pseudomonadati</taxon>
        <taxon>Pseudomonadota</taxon>
        <taxon>Betaproteobacteria</taxon>
        <taxon>Burkholderiales</taxon>
        <taxon>Burkholderiaceae</taxon>
        <taxon>Burkholderia</taxon>
        <taxon>Burkholderia cepacia complex</taxon>
    </lineage>
</organism>
<reference key="1">
    <citation type="journal article" date="2009" name="J. Bacteriol.">
        <title>The genome of Burkholderia cenocepacia J2315, an epidemic pathogen of cystic fibrosis patients.</title>
        <authorList>
            <person name="Holden M.T."/>
            <person name="Seth-Smith H.M."/>
            <person name="Crossman L.C."/>
            <person name="Sebaihia M."/>
            <person name="Bentley S.D."/>
            <person name="Cerdeno-Tarraga A.M."/>
            <person name="Thomson N.R."/>
            <person name="Bason N."/>
            <person name="Quail M.A."/>
            <person name="Sharp S."/>
            <person name="Cherevach I."/>
            <person name="Churcher C."/>
            <person name="Goodhead I."/>
            <person name="Hauser H."/>
            <person name="Holroyd N."/>
            <person name="Mungall K."/>
            <person name="Scott P."/>
            <person name="Walker D."/>
            <person name="White B."/>
            <person name="Rose H."/>
            <person name="Iversen P."/>
            <person name="Mil-Homens D."/>
            <person name="Rocha E.P."/>
            <person name="Fialho A.M."/>
            <person name="Baldwin A."/>
            <person name="Dowson C."/>
            <person name="Barrell B.G."/>
            <person name="Govan J.R."/>
            <person name="Vandamme P."/>
            <person name="Hart C.A."/>
            <person name="Mahenthiralingam E."/>
            <person name="Parkhill J."/>
        </authorList>
    </citation>
    <scope>NUCLEOTIDE SEQUENCE [LARGE SCALE GENOMIC DNA]</scope>
    <source>
        <strain>ATCC BAA-245 / DSM 16553 / LMG 16656 / NCTC 13227 / J2315 / CF5610</strain>
    </source>
</reference>
<keyword id="KW-0067">ATP-binding</keyword>
<keyword id="KW-0963">Cytoplasm</keyword>
<keyword id="KW-0418">Kinase</keyword>
<keyword id="KW-0545">Nucleotide biosynthesis</keyword>
<keyword id="KW-0547">Nucleotide-binding</keyword>
<keyword id="KW-0808">Transferase</keyword>
<evidence type="ECO:0000255" key="1">
    <source>
        <dbReference type="HAMAP-Rule" id="MF_00235"/>
    </source>
</evidence>
<name>KAD_BURCJ</name>
<feature type="chain" id="PRO_1000100537" description="Adenylate kinase">
    <location>
        <begin position="1"/>
        <end position="220"/>
    </location>
</feature>
<feature type="region of interest" description="NMP" evidence="1">
    <location>
        <begin position="30"/>
        <end position="59"/>
    </location>
</feature>
<feature type="region of interest" description="LID" evidence="1">
    <location>
        <begin position="122"/>
        <end position="159"/>
    </location>
</feature>
<feature type="binding site" evidence="1">
    <location>
        <begin position="10"/>
        <end position="15"/>
    </location>
    <ligand>
        <name>ATP</name>
        <dbReference type="ChEBI" id="CHEBI:30616"/>
    </ligand>
</feature>
<feature type="binding site" evidence="1">
    <location>
        <position position="31"/>
    </location>
    <ligand>
        <name>AMP</name>
        <dbReference type="ChEBI" id="CHEBI:456215"/>
    </ligand>
</feature>
<feature type="binding site" evidence="1">
    <location>
        <position position="36"/>
    </location>
    <ligand>
        <name>AMP</name>
        <dbReference type="ChEBI" id="CHEBI:456215"/>
    </ligand>
</feature>
<feature type="binding site" evidence="1">
    <location>
        <begin position="57"/>
        <end position="59"/>
    </location>
    <ligand>
        <name>AMP</name>
        <dbReference type="ChEBI" id="CHEBI:456215"/>
    </ligand>
</feature>
<feature type="binding site" evidence="1">
    <location>
        <begin position="85"/>
        <end position="88"/>
    </location>
    <ligand>
        <name>AMP</name>
        <dbReference type="ChEBI" id="CHEBI:456215"/>
    </ligand>
</feature>
<feature type="binding site" evidence="1">
    <location>
        <position position="92"/>
    </location>
    <ligand>
        <name>AMP</name>
        <dbReference type="ChEBI" id="CHEBI:456215"/>
    </ligand>
</feature>
<feature type="binding site" evidence="1">
    <location>
        <position position="123"/>
    </location>
    <ligand>
        <name>ATP</name>
        <dbReference type="ChEBI" id="CHEBI:30616"/>
    </ligand>
</feature>
<feature type="binding site" evidence="1">
    <location>
        <begin position="132"/>
        <end position="133"/>
    </location>
    <ligand>
        <name>ATP</name>
        <dbReference type="ChEBI" id="CHEBI:30616"/>
    </ligand>
</feature>
<feature type="binding site" evidence="1">
    <location>
        <position position="156"/>
    </location>
    <ligand>
        <name>AMP</name>
        <dbReference type="ChEBI" id="CHEBI:456215"/>
    </ligand>
</feature>
<feature type="binding site" evidence="1">
    <location>
        <position position="167"/>
    </location>
    <ligand>
        <name>AMP</name>
        <dbReference type="ChEBI" id="CHEBI:456215"/>
    </ligand>
</feature>
<feature type="binding site" evidence="1">
    <location>
        <position position="206"/>
    </location>
    <ligand>
        <name>ATP</name>
        <dbReference type="ChEBI" id="CHEBI:30616"/>
    </ligand>
</feature>